<proteinExistence type="inferred from homology"/>
<sequence>MSELLSFALFLASVLIYAWKAGRNTWWFAATLTVLGLFVVLNITLFASDYFTGDGINDAVLYTLTNSLTGAGVSKYILPGIGIVLGLTAVFGALGWILRRRRHHPHHFGYSLLALLLALGSVDASPAFRQITELVKSQSRDGDPDFAAYYKEPSKTIPDPKLNLVYIYGESLERTYFDNEAFPDLTPELGALKNEGLDFSHTQQLPGTDYTIAGMVASQCGIPLFAPFEGNASASVSSFFPQNICLGDILKNSGYQNYFVQGANLRFAGKDVFLKSHGFDHLYGSEELKSVVADPHYRNDWGFYDDTVLDEAWKKFEELSRSGQRFSLFTLTVDTHHPDGFISRTCNRKKYDFDGKPNQSFSAVSCSQENIAAFINKIKASPWFKDTVIVVSSDHLAMNNTAWKYLNKQDRNNLFFVIRGDKPQQETLAVKRNTMDNGATVLDILGGDNYLGLGRSSLSGQSMSEIFLNIKEKTLAWKPDIIRLWKFPKEMKEFTIDQQKNMIAFSGSHFRLPLLLRVSDKRVEPLPESEYSAPLRFQLADFAPRDNFVWVDRCYKMAQLWAPELALSTDWCVSQGQLGGQQIVQHVDKTMWKGKTAFKDTVIDMARYKSNVDTLKIVDNDIRYKADSFIFNVAGAPEEVKQFSGISRPESWGRWSNAQLGDEVKIEYKHPLPKKFDLVITAKAYGNNASRPIPVRVGNEEQTLVLGNEVTTTTLHFDNPTDADTLVIVPPEPVSTNEGNILGHSPRKLGIGMVEIKVVEREG</sequence>
<protein>
    <recommendedName>
        <fullName evidence="1">Phosphoglycerol transferase I</fullName>
        <ecNumber evidence="1">2.7.8.20</ecNumber>
    </recommendedName>
    <alternativeName>
        <fullName evidence="1">Phosphatidylglycerol--membrane-oligosaccharide glycerophosphotransferase</fullName>
    </alternativeName>
</protein>
<feature type="chain" id="PRO_1000136625" description="Phosphoglycerol transferase I">
    <location>
        <begin position="1"/>
        <end position="763"/>
    </location>
</feature>
<feature type="transmembrane region" description="Helical" evidence="1">
    <location>
        <begin position="1"/>
        <end position="21"/>
    </location>
</feature>
<feature type="transmembrane region" description="Helical" evidence="1">
    <location>
        <begin position="26"/>
        <end position="46"/>
    </location>
</feature>
<feature type="transmembrane region" description="Helical" evidence="1">
    <location>
        <begin position="77"/>
        <end position="97"/>
    </location>
</feature>
<feature type="transmembrane region" description="Helical" evidence="1">
    <location>
        <begin position="108"/>
        <end position="128"/>
    </location>
</feature>
<comment type="function">
    <text evidence="1">Transfers a phosphoglycerol residue from phosphatidylglycerol to the membrane-bound nascent glucan backbones.</text>
</comment>
<comment type="catalytic activity">
    <reaction evidence="1">
        <text>a phosphatidylglycerol + a membrane-derived-oligosaccharide D-glucose = a 1,2-diacyl-sn-glycerol + a membrane-derived-oligosaccharide 6-(glycerophospho)-D-glucose.</text>
        <dbReference type="EC" id="2.7.8.20"/>
    </reaction>
</comment>
<comment type="pathway">
    <text evidence="1">Glycan metabolism; osmoregulated periplasmic glucan (OPG) biosynthesis.</text>
</comment>
<comment type="subcellular location">
    <subcellularLocation>
        <location evidence="1">Cell inner membrane</location>
        <topology evidence="1">Multi-pass membrane protein</topology>
    </subcellularLocation>
</comment>
<comment type="similarity">
    <text evidence="1">Belongs to the OpgB family.</text>
</comment>
<keyword id="KW-0997">Cell inner membrane</keyword>
<keyword id="KW-1003">Cell membrane</keyword>
<keyword id="KW-0472">Membrane</keyword>
<keyword id="KW-0808">Transferase</keyword>
<keyword id="KW-0812">Transmembrane</keyword>
<keyword id="KW-1133">Transmembrane helix</keyword>
<organism>
    <name type="scientific">Escherichia coli (strain SE11)</name>
    <dbReference type="NCBI Taxonomy" id="409438"/>
    <lineage>
        <taxon>Bacteria</taxon>
        <taxon>Pseudomonadati</taxon>
        <taxon>Pseudomonadota</taxon>
        <taxon>Gammaproteobacteria</taxon>
        <taxon>Enterobacterales</taxon>
        <taxon>Enterobacteriaceae</taxon>
        <taxon>Escherichia</taxon>
    </lineage>
</organism>
<reference key="1">
    <citation type="journal article" date="2008" name="DNA Res.">
        <title>Complete genome sequence and comparative analysis of the wild-type commensal Escherichia coli strain SE11 isolated from a healthy adult.</title>
        <authorList>
            <person name="Oshima K."/>
            <person name="Toh H."/>
            <person name="Ogura Y."/>
            <person name="Sasamoto H."/>
            <person name="Morita H."/>
            <person name="Park S.-H."/>
            <person name="Ooka T."/>
            <person name="Iyoda S."/>
            <person name="Taylor T.D."/>
            <person name="Hayashi T."/>
            <person name="Itoh K."/>
            <person name="Hattori M."/>
        </authorList>
    </citation>
    <scope>NUCLEOTIDE SEQUENCE [LARGE SCALE GENOMIC DNA]</scope>
    <source>
        <strain>SE11</strain>
    </source>
</reference>
<dbReference type="EC" id="2.7.8.20" evidence="1"/>
<dbReference type="EMBL" id="AP009240">
    <property type="protein sequence ID" value="BAG80159.1"/>
    <property type="molecule type" value="Genomic_DNA"/>
</dbReference>
<dbReference type="RefSeq" id="WP_001292657.1">
    <property type="nucleotide sequence ID" value="NC_011415.1"/>
</dbReference>
<dbReference type="SMR" id="B6I2P2"/>
<dbReference type="GeneID" id="75202958"/>
<dbReference type="KEGG" id="ecy:ECSE_4635"/>
<dbReference type="HOGENOM" id="CLU_023986_1_0_6"/>
<dbReference type="UniPathway" id="UPA00637"/>
<dbReference type="Proteomes" id="UP000008199">
    <property type="component" value="Chromosome"/>
</dbReference>
<dbReference type="GO" id="GO:0005886">
    <property type="term" value="C:plasma membrane"/>
    <property type="evidence" value="ECO:0007669"/>
    <property type="project" value="UniProtKB-SubCell"/>
</dbReference>
<dbReference type="GO" id="GO:0008960">
    <property type="term" value="F:phosphatidylglycerol-membrane-oligosaccharide glycerophosphotransferase activity"/>
    <property type="evidence" value="ECO:0007669"/>
    <property type="project" value="UniProtKB-UniRule"/>
</dbReference>
<dbReference type="GO" id="GO:0009250">
    <property type="term" value="P:glucan biosynthetic process"/>
    <property type="evidence" value="ECO:0007669"/>
    <property type="project" value="UniProtKB-UniRule"/>
</dbReference>
<dbReference type="CDD" id="cd16015">
    <property type="entry name" value="LTA_synthase"/>
    <property type="match status" value="1"/>
</dbReference>
<dbReference type="FunFam" id="3.40.720.10:FF:000009">
    <property type="entry name" value="Phosphoglycerol transferase I"/>
    <property type="match status" value="1"/>
</dbReference>
<dbReference type="Gene3D" id="3.40.720.10">
    <property type="entry name" value="Alkaline Phosphatase, subunit A"/>
    <property type="match status" value="1"/>
</dbReference>
<dbReference type="HAMAP" id="MF_01070">
    <property type="entry name" value="MdoB_OpgB"/>
    <property type="match status" value="1"/>
</dbReference>
<dbReference type="InterPro" id="IPR017850">
    <property type="entry name" value="Alkaline_phosphatase_core_sf"/>
</dbReference>
<dbReference type="InterPro" id="IPR054288">
    <property type="entry name" value="DUF7024"/>
</dbReference>
<dbReference type="InterPro" id="IPR020881">
    <property type="entry name" value="OpgB"/>
</dbReference>
<dbReference type="InterPro" id="IPR050448">
    <property type="entry name" value="OpgB/LTA_synthase_biosynth"/>
</dbReference>
<dbReference type="InterPro" id="IPR000917">
    <property type="entry name" value="Sulfatase_N"/>
</dbReference>
<dbReference type="NCBIfam" id="NF003000">
    <property type="entry name" value="PRK03776.1"/>
    <property type="match status" value="1"/>
</dbReference>
<dbReference type="PANTHER" id="PTHR47371">
    <property type="entry name" value="LIPOTEICHOIC ACID SYNTHASE"/>
    <property type="match status" value="1"/>
</dbReference>
<dbReference type="PANTHER" id="PTHR47371:SF3">
    <property type="entry name" value="PHOSPHOGLYCEROL TRANSFERASE I"/>
    <property type="match status" value="1"/>
</dbReference>
<dbReference type="Pfam" id="PF22895">
    <property type="entry name" value="DUF7024"/>
    <property type="match status" value="1"/>
</dbReference>
<dbReference type="Pfam" id="PF00884">
    <property type="entry name" value="Sulfatase"/>
    <property type="match status" value="1"/>
</dbReference>
<dbReference type="SUPFAM" id="SSF53649">
    <property type="entry name" value="Alkaline phosphatase-like"/>
    <property type="match status" value="1"/>
</dbReference>
<accession>B6I2P2</accession>
<gene>
    <name evidence="1" type="primary">mdoB</name>
    <name evidence="1" type="synonym">opgB</name>
    <name type="ordered locus">ECSE_4635</name>
</gene>
<evidence type="ECO:0000255" key="1">
    <source>
        <dbReference type="HAMAP-Rule" id="MF_01070"/>
    </source>
</evidence>
<name>OPGB_ECOSE</name>